<name>CBIX_SACS2</name>
<comment type="function">
    <text evidence="1">Catalyzes the insertion of Co(2+) into sirohydrochlorin as part of the anaerobic pathway to cobalamin biosynthesis.</text>
</comment>
<comment type="catalytic activity">
    <reaction evidence="1">
        <text>Co-sirohydrochlorin + 2 H(+) = sirohydrochlorin + Co(2+)</text>
        <dbReference type="Rhea" id="RHEA:15893"/>
        <dbReference type="ChEBI" id="CHEBI:15378"/>
        <dbReference type="ChEBI" id="CHEBI:48828"/>
        <dbReference type="ChEBI" id="CHEBI:58351"/>
        <dbReference type="ChEBI" id="CHEBI:60049"/>
        <dbReference type="EC" id="4.99.1.3"/>
    </reaction>
</comment>
<comment type="pathway">
    <text evidence="1">Cofactor biosynthesis; adenosylcobalamin biosynthesis; cob(II)yrinate a,c-diamide from sirohydrochlorin (anaerobic route): step 1/10.</text>
</comment>
<comment type="subunit">
    <text evidence="1">Homotetramer; dimer of dimers.</text>
</comment>
<comment type="similarity">
    <text evidence="1">Belongs to the CbiX family. CbiXS subfamily.</text>
</comment>
<organism>
    <name type="scientific">Saccharolobus solfataricus (strain ATCC 35092 / DSM 1617 / JCM 11322 / P2)</name>
    <name type="common">Sulfolobus solfataricus</name>
    <dbReference type="NCBI Taxonomy" id="273057"/>
    <lineage>
        <taxon>Archaea</taxon>
        <taxon>Thermoproteota</taxon>
        <taxon>Thermoprotei</taxon>
        <taxon>Sulfolobales</taxon>
        <taxon>Sulfolobaceae</taxon>
        <taxon>Saccharolobus</taxon>
    </lineage>
</organism>
<protein>
    <recommendedName>
        <fullName evidence="1">Sirohydrochlorin cobaltochelatase</fullName>
        <ecNumber evidence="1">4.99.1.3</ecNumber>
    </recommendedName>
    <alternativeName>
        <fullName evidence="1">CbiXS</fullName>
    </alternativeName>
</protein>
<reference key="1">
    <citation type="journal article" date="2001" name="Proc. Natl. Acad. Sci. U.S.A.">
        <title>The complete genome of the crenarchaeon Sulfolobus solfataricus P2.</title>
        <authorList>
            <person name="She Q."/>
            <person name="Singh R.K."/>
            <person name="Confalonieri F."/>
            <person name="Zivanovic Y."/>
            <person name="Allard G."/>
            <person name="Awayez M.J."/>
            <person name="Chan-Weiher C.C.-Y."/>
            <person name="Clausen I.G."/>
            <person name="Curtis B.A."/>
            <person name="De Moors A."/>
            <person name="Erauso G."/>
            <person name="Fletcher C."/>
            <person name="Gordon P.M.K."/>
            <person name="Heikamp-de Jong I."/>
            <person name="Jeffries A.C."/>
            <person name="Kozera C.J."/>
            <person name="Medina N."/>
            <person name="Peng X."/>
            <person name="Thi-Ngoc H.P."/>
            <person name="Redder P."/>
            <person name="Schenk M.E."/>
            <person name="Theriault C."/>
            <person name="Tolstrup N."/>
            <person name="Charlebois R.L."/>
            <person name="Doolittle W.F."/>
            <person name="Duguet M."/>
            <person name="Gaasterland T."/>
            <person name="Garrett R.A."/>
            <person name="Ragan M.A."/>
            <person name="Sensen C.W."/>
            <person name="Van der Oost J."/>
        </authorList>
    </citation>
    <scope>NUCLEOTIDE SEQUENCE [LARGE SCALE GENOMIC DNA]</scope>
    <source>
        <strain>ATCC 35092 / DSM 1617 / JCM 11322 / P2</strain>
    </source>
</reference>
<keyword id="KW-0169">Cobalamin biosynthesis</keyword>
<keyword id="KW-0170">Cobalt</keyword>
<keyword id="KW-0456">Lyase</keyword>
<keyword id="KW-0479">Metal-binding</keyword>
<keyword id="KW-1185">Reference proteome</keyword>
<gene>
    <name evidence="1" type="primary">cbiX</name>
    <name type="ordered locus">SSO0410</name>
</gene>
<proteinExistence type="inferred from homology"/>
<accession>Q980A7</accession>
<dbReference type="EC" id="4.99.1.3" evidence="1"/>
<dbReference type="EMBL" id="AE006641">
    <property type="protein sequence ID" value="AAK40738.1"/>
    <property type="molecule type" value="Genomic_DNA"/>
</dbReference>
<dbReference type="PIR" id="C90185">
    <property type="entry name" value="C90185"/>
</dbReference>
<dbReference type="RefSeq" id="WP_009988774.1">
    <property type="nucleotide sequence ID" value="NC_002754.1"/>
</dbReference>
<dbReference type="SMR" id="Q980A7"/>
<dbReference type="FunCoup" id="Q980A7">
    <property type="interactions" value="98"/>
</dbReference>
<dbReference type="STRING" id="273057.SSO0410"/>
<dbReference type="PaxDb" id="273057-SSO0410"/>
<dbReference type="EnsemblBacteria" id="AAK40738">
    <property type="protein sequence ID" value="AAK40738"/>
    <property type="gene ID" value="SSO0410"/>
</dbReference>
<dbReference type="KEGG" id="sso:SSO0410"/>
<dbReference type="PATRIC" id="fig|273057.12.peg.405"/>
<dbReference type="eggNOG" id="arCOG02246">
    <property type="taxonomic scope" value="Archaea"/>
</dbReference>
<dbReference type="HOGENOM" id="CLU_065901_2_1_2"/>
<dbReference type="InParanoid" id="Q980A7"/>
<dbReference type="PhylomeDB" id="Q980A7"/>
<dbReference type="UniPathway" id="UPA00148">
    <property type="reaction ID" value="UER00223"/>
</dbReference>
<dbReference type="Proteomes" id="UP000001974">
    <property type="component" value="Chromosome"/>
</dbReference>
<dbReference type="GO" id="GO:0050897">
    <property type="term" value="F:cobalt ion binding"/>
    <property type="evidence" value="ECO:0007669"/>
    <property type="project" value="UniProtKB-UniRule"/>
</dbReference>
<dbReference type="GO" id="GO:0016852">
    <property type="term" value="F:sirohydrochlorin cobaltochelatase activity"/>
    <property type="evidence" value="ECO:0007669"/>
    <property type="project" value="UniProtKB-UniRule"/>
</dbReference>
<dbReference type="GO" id="GO:0019251">
    <property type="term" value="P:anaerobic cobalamin biosynthetic process"/>
    <property type="evidence" value="ECO:0007669"/>
    <property type="project" value="UniProtKB-UniRule"/>
</dbReference>
<dbReference type="CDD" id="cd03416">
    <property type="entry name" value="CbiX_SirB_N"/>
    <property type="match status" value="1"/>
</dbReference>
<dbReference type="Gene3D" id="3.40.50.1400">
    <property type="match status" value="1"/>
</dbReference>
<dbReference type="HAMAP" id="MF_00785">
    <property type="entry name" value="CbiX"/>
    <property type="match status" value="1"/>
</dbReference>
<dbReference type="InterPro" id="IPR002762">
    <property type="entry name" value="CbiX-like"/>
</dbReference>
<dbReference type="InterPro" id="IPR023652">
    <property type="entry name" value="SiroHydchlorin_Cochelatase"/>
</dbReference>
<dbReference type="InterPro" id="IPR050963">
    <property type="entry name" value="Sirohydro_Cobaltochel/CbiX"/>
</dbReference>
<dbReference type="PANTHER" id="PTHR33542">
    <property type="entry name" value="SIROHYDROCHLORIN FERROCHELATASE, CHLOROPLASTIC"/>
    <property type="match status" value="1"/>
</dbReference>
<dbReference type="PANTHER" id="PTHR33542:SF3">
    <property type="entry name" value="SIROHYDROCHLORIN FERROCHELATASE, CHLOROPLASTIC"/>
    <property type="match status" value="1"/>
</dbReference>
<dbReference type="Pfam" id="PF01903">
    <property type="entry name" value="CbiX"/>
    <property type="match status" value="1"/>
</dbReference>
<dbReference type="SUPFAM" id="SSF53800">
    <property type="entry name" value="Chelatase"/>
    <property type="match status" value="1"/>
</dbReference>
<evidence type="ECO:0000255" key="1">
    <source>
        <dbReference type="HAMAP-Rule" id="MF_00785"/>
    </source>
</evidence>
<feature type="chain" id="PRO_0000150362" description="Sirohydrochlorin cobaltochelatase">
    <location>
        <begin position="1"/>
        <end position="128"/>
    </location>
</feature>
<feature type="active site" description="Proton acceptor" evidence="1">
    <location>
        <position position="9"/>
    </location>
</feature>
<feature type="binding site" evidence="1">
    <location>
        <position position="9"/>
    </location>
    <ligand>
        <name>Co(2+)</name>
        <dbReference type="ChEBI" id="CHEBI:48828"/>
    </ligand>
</feature>
<feature type="binding site" evidence="1">
    <location>
        <position position="43"/>
    </location>
    <ligand>
        <name>substrate</name>
    </ligand>
</feature>
<feature type="binding site" evidence="1">
    <location>
        <begin position="68"/>
        <end position="73"/>
    </location>
    <ligand>
        <name>substrate</name>
    </ligand>
</feature>
<feature type="binding site" evidence="1">
    <location>
        <position position="73"/>
    </location>
    <ligand>
        <name>Co(2+)</name>
        <dbReference type="ChEBI" id="CHEBI:48828"/>
    </ligand>
</feature>
<sequence>MLGVLLVLHGSKIPEWKDVGIKYAEYLSKYFSLVEFGFLEFNKPTLSEALSNLLAKGADKIVVVPLLFATGTHFRRDIPRLLGIDNDEKKIRYMGREIEITIADPLGFDEKIGEVLVKRVNETYNKNY</sequence>